<reference key="1">
    <citation type="journal article" date="2004" name="Gene">
        <title>The complete nucleotide sequence of wild rice (Oryza nivara) chloroplast genome: first genome wide comparative sequence analysis of wild and cultivated rice.</title>
        <authorList>
            <person name="Masood M.S."/>
            <person name="Nishikawa T."/>
            <person name="Fukuoka S."/>
            <person name="Njenga P.K."/>
            <person name="Tsudzuki T."/>
            <person name="Kadowaki K."/>
        </authorList>
    </citation>
    <scope>NUCLEOTIDE SEQUENCE [LARGE SCALE GENOMIC DNA]</scope>
    <source>
        <strain evidence="2">cv. SL10</strain>
    </source>
</reference>
<protein>
    <recommendedName>
        <fullName evidence="1">ATP synthase subunit c, chloroplastic</fullName>
    </recommendedName>
    <alternativeName>
        <fullName evidence="1">ATP synthase F(0) sector subunit c</fullName>
    </alternativeName>
    <alternativeName>
        <fullName evidence="1">ATPase subunit III</fullName>
    </alternativeName>
    <alternativeName>
        <fullName evidence="1">F-type ATPase subunit c</fullName>
        <shortName evidence="1">F-ATPase subunit c</shortName>
    </alternativeName>
    <alternativeName>
        <fullName evidence="1">Lipid-binding protein</fullName>
    </alternativeName>
</protein>
<geneLocation type="chloroplast"/>
<accession>Q6ENH9</accession>
<sequence length="81" mass="7974">MNPLIAAASVIAAGLAVGLASIGPGVGQGTAAGQAVEGIARQPEAEGKIRGTLLLSLAFMEALTIYGLVVALALLFANPFV</sequence>
<organism>
    <name type="scientific">Oryza nivara</name>
    <name type="common">Indian wild rice</name>
    <name type="synonym">Oryza sativa f. spontanea</name>
    <dbReference type="NCBI Taxonomy" id="4536"/>
    <lineage>
        <taxon>Eukaryota</taxon>
        <taxon>Viridiplantae</taxon>
        <taxon>Streptophyta</taxon>
        <taxon>Embryophyta</taxon>
        <taxon>Tracheophyta</taxon>
        <taxon>Spermatophyta</taxon>
        <taxon>Magnoliopsida</taxon>
        <taxon>Liliopsida</taxon>
        <taxon>Poales</taxon>
        <taxon>Poaceae</taxon>
        <taxon>BOP clade</taxon>
        <taxon>Oryzoideae</taxon>
        <taxon>Oryzeae</taxon>
        <taxon>Oryzinae</taxon>
        <taxon>Oryza</taxon>
    </lineage>
</organism>
<name>ATPH_ORYNI</name>
<proteinExistence type="inferred from homology"/>
<evidence type="ECO:0000255" key="1">
    <source>
        <dbReference type="HAMAP-Rule" id="MF_01396"/>
    </source>
</evidence>
<evidence type="ECO:0000312" key="2">
    <source>
        <dbReference type="Proteomes" id="UP000006591"/>
    </source>
</evidence>
<dbReference type="EMBL" id="AP006728">
    <property type="protein sequence ID" value="BAD26773.1"/>
    <property type="molecule type" value="Genomic_DNA"/>
</dbReference>
<dbReference type="RefSeq" id="YP_052744.1">
    <property type="nucleotide sequence ID" value="NC_005973.1"/>
</dbReference>
<dbReference type="SMR" id="Q6ENH9"/>
<dbReference type="STRING" id="4536.Q6ENH9"/>
<dbReference type="GeneID" id="2885906"/>
<dbReference type="Proteomes" id="UP000006591">
    <property type="component" value="Chloroplast"/>
</dbReference>
<dbReference type="GO" id="GO:0009535">
    <property type="term" value="C:chloroplast thylakoid membrane"/>
    <property type="evidence" value="ECO:0007669"/>
    <property type="project" value="UniProtKB-SubCell"/>
</dbReference>
<dbReference type="GO" id="GO:0009536">
    <property type="term" value="C:plastid"/>
    <property type="evidence" value="ECO:0000305"/>
    <property type="project" value="Gramene"/>
</dbReference>
<dbReference type="GO" id="GO:0045259">
    <property type="term" value="C:proton-transporting ATP synthase complex"/>
    <property type="evidence" value="ECO:0007669"/>
    <property type="project" value="UniProtKB-KW"/>
</dbReference>
<dbReference type="GO" id="GO:0033177">
    <property type="term" value="C:proton-transporting two-sector ATPase complex, proton-transporting domain"/>
    <property type="evidence" value="ECO:0007669"/>
    <property type="project" value="InterPro"/>
</dbReference>
<dbReference type="GO" id="GO:0008289">
    <property type="term" value="F:lipid binding"/>
    <property type="evidence" value="ECO:0007669"/>
    <property type="project" value="UniProtKB-KW"/>
</dbReference>
<dbReference type="GO" id="GO:0046933">
    <property type="term" value="F:proton-transporting ATP synthase activity, rotational mechanism"/>
    <property type="evidence" value="ECO:0007669"/>
    <property type="project" value="UniProtKB-UniRule"/>
</dbReference>
<dbReference type="CDD" id="cd18183">
    <property type="entry name" value="ATP-synt_Fo_c_ATPH"/>
    <property type="match status" value="1"/>
</dbReference>
<dbReference type="FunFam" id="1.20.20.10:FF:000001">
    <property type="entry name" value="ATP synthase subunit c, chloroplastic"/>
    <property type="match status" value="1"/>
</dbReference>
<dbReference type="Gene3D" id="1.20.20.10">
    <property type="entry name" value="F1F0 ATP synthase subunit C"/>
    <property type="match status" value="1"/>
</dbReference>
<dbReference type="HAMAP" id="MF_01396">
    <property type="entry name" value="ATP_synth_c_bact"/>
    <property type="match status" value="1"/>
</dbReference>
<dbReference type="InterPro" id="IPR005953">
    <property type="entry name" value="ATP_synth_csu_bac/chlpt"/>
</dbReference>
<dbReference type="InterPro" id="IPR000454">
    <property type="entry name" value="ATP_synth_F0_csu"/>
</dbReference>
<dbReference type="InterPro" id="IPR020537">
    <property type="entry name" value="ATP_synth_F0_csu_DDCD_BS"/>
</dbReference>
<dbReference type="InterPro" id="IPR038662">
    <property type="entry name" value="ATP_synth_F0_csu_sf"/>
</dbReference>
<dbReference type="InterPro" id="IPR002379">
    <property type="entry name" value="ATPase_proteolipid_c-like_dom"/>
</dbReference>
<dbReference type="InterPro" id="IPR035921">
    <property type="entry name" value="F/V-ATP_Csub_sf"/>
</dbReference>
<dbReference type="NCBIfam" id="TIGR01260">
    <property type="entry name" value="ATP_synt_c"/>
    <property type="match status" value="1"/>
</dbReference>
<dbReference type="NCBIfam" id="NF005608">
    <property type="entry name" value="PRK07354.1"/>
    <property type="match status" value="1"/>
</dbReference>
<dbReference type="PANTHER" id="PTHR10031">
    <property type="entry name" value="ATP SYNTHASE LIPID-BINDING PROTEIN, MITOCHONDRIAL"/>
    <property type="match status" value="1"/>
</dbReference>
<dbReference type="PANTHER" id="PTHR10031:SF0">
    <property type="entry name" value="ATPASE PROTEIN 9"/>
    <property type="match status" value="1"/>
</dbReference>
<dbReference type="Pfam" id="PF00137">
    <property type="entry name" value="ATP-synt_C"/>
    <property type="match status" value="1"/>
</dbReference>
<dbReference type="PRINTS" id="PR00124">
    <property type="entry name" value="ATPASEC"/>
</dbReference>
<dbReference type="SUPFAM" id="SSF81333">
    <property type="entry name" value="F1F0 ATP synthase subunit C"/>
    <property type="match status" value="1"/>
</dbReference>
<dbReference type="PROSITE" id="PS00605">
    <property type="entry name" value="ATPASE_C"/>
    <property type="match status" value="1"/>
</dbReference>
<comment type="function">
    <text evidence="1">F(1)F(0) ATP synthase produces ATP from ADP in the presence of a proton or sodium gradient. F-type ATPases consist of two structural domains, F(1) containing the extramembraneous catalytic core and F(0) containing the membrane proton channel, linked together by a central stalk and a peripheral stalk. During catalysis, ATP synthesis in the catalytic domain of F(1) is coupled via a rotary mechanism of the central stalk subunits to proton translocation.</text>
</comment>
<comment type="function">
    <text evidence="1">Key component of the F(0) channel; it plays a direct role in translocation across the membrane. A homomeric c-ring of between 10-14 subunits forms the central stalk rotor element with the F(1) delta and epsilon subunits.</text>
</comment>
<comment type="subunit">
    <text evidence="1">F-type ATPases have 2 components, F(1) - the catalytic core - and F(0) - the membrane proton channel. F(1) has five subunits: alpha(3), beta(3), gamma(1), delta(1), epsilon(1). F(0) has four main subunits: a(1), b(1), b'(1) and c(10-14). The alpha and beta chains form an alternating ring which encloses part of the gamma chain. F(1) is attached to F(0) by a central stalk formed by the gamma and epsilon chains, while a peripheral stalk is formed by the delta, b and b' chains.</text>
</comment>
<comment type="subcellular location">
    <subcellularLocation>
        <location evidence="1">Plastid</location>
        <location evidence="1">Chloroplast thylakoid membrane</location>
        <topology evidence="1">Multi-pass membrane protein</topology>
    </subcellularLocation>
</comment>
<comment type="miscellaneous">
    <text>In plastids the F-type ATPase is also known as CF(1)CF(0).</text>
</comment>
<comment type="similarity">
    <text evidence="1">Belongs to the ATPase C chain family.</text>
</comment>
<keyword id="KW-0066">ATP synthesis</keyword>
<keyword id="KW-0138">CF(0)</keyword>
<keyword id="KW-0150">Chloroplast</keyword>
<keyword id="KW-0375">Hydrogen ion transport</keyword>
<keyword id="KW-0406">Ion transport</keyword>
<keyword id="KW-0446">Lipid-binding</keyword>
<keyword id="KW-0472">Membrane</keyword>
<keyword id="KW-0934">Plastid</keyword>
<keyword id="KW-1185">Reference proteome</keyword>
<keyword id="KW-0793">Thylakoid</keyword>
<keyword id="KW-0812">Transmembrane</keyword>
<keyword id="KW-1133">Transmembrane helix</keyword>
<keyword id="KW-0813">Transport</keyword>
<gene>
    <name evidence="1" type="primary">atpH</name>
</gene>
<feature type="chain" id="PRO_0000112198" description="ATP synthase subunit c, chloroplastic">
    <location>
        <begin position="1"/>
        <end position="81"/>
    </location>
</feature>
<feature type="transmembrane region" description="Helical" evidence="1">
    <location>
        <begin position="3"/>
        <end position="23"/>
    </location>
</feature>
<feature type="transmembrane region" description="Helical" evidence="1">
    <location>
        <begin position="57"/>
        <end position="77"/>
    </location>
</feature>
<feature type="site" description="Reversibly protonated during proton transport" evidence="1">
    <location>
        <position position="61"/>
    </location>
</feature>